<evidence type="ECO:0000255" key="1">
    <source>
        <dbReference type="HAMAP-Rule" id="MF_00008"/>
    </source>
</evidence>
<keyword id="KW-0963">Cytoplasm</keyword>
<keyword id="KW-0489">Methyltransferase</keyword>
<keyword id="KW-0545">Nucleotide biosynthesis</keyword>
<keyword id="KW-0808">Transferase</keyword>
<feature type="chain" id="PRO_1000197247" description="Thymidylate synthase">
    <location>
        <begin position="1"/>
        <end position="264"/>
    </location>
</feature>
<feature type="active site" description="Nucleophile" evidence="1">
    <location>
        <position position="146"/>
    </location>
</feature>
<feature type="binding site" description="in other chain" evidence="1">
    <location>
        <position position="21"/>
    </location>
    <ligand>
        <name>dUMP</name>
        <dbReference type="ChEBI" id="CHEBI:246422"/>
        <note>ligand shared between dimeric partners</note>
    </ligand>
</feature>
<feature type="binding site" evidence="1">
    <location>
        <position position="51"/>
    </location>
    <ligand>
        <name>(6R)-5,10-methylene-5,6,7,8-tetrahydrofolate</name>
        <dbReference type="ChEBI" id="CHEBI:15636"/>
    </ligand>
</feature>
<feature type="binding site" evidence="1">
    <location>
        <begin position="126"/>
        <end position="127"/>
    </location>
    <ligand>
        <name>dUMP</name>
        <dbReference type="ChEBI" id="CHEBI:246422"/>
        <note>ligand shared between dimeric partners</note>
    </ligand>
</feature>
<feature type="binding site" description="in other chain" evidence="1">
    <location>
        <begin position="166"/>
        <end position="169"/>
    </location>
    <ligand>
        <name>dUMP</name>
        <dbReference type="ChEBI" id="CHEBI:246422"/>
        <note>ligand shared between dimeric partners</note>
    </ligand>
</feature>
<feature type="binding site" evidence="1">
    <location>
        <position position="169"/>
    </location>
    <ligand>
        <name>(6R)-5,10-methylene-5,6,7,8-tetrahydrofolate</name>
        <dbReference type="ChEBI" id="CHEBI:15636"/>
    </ligand>
</feature>
<feature type="binding site" description="in other chain" evidence="1">
    <location>
        <position position="177"/>
    </location>
    <ligand>
        <name>dUMP</name>
        <dbReference type="ChEBI" id="CHEBI:246422"/>
        <note>ligand shared between dimeric partners</note>
    </ligand>
</feature>
<feature type="binding site" description="in other chain" evidence="1">
    <location>
        <begin position="207"/>
        <end position="209"/>
    </location>
    <ligand>
        <name>dUMP</name>
        <dbReference type="ChEBI" id="CHEBI:246422"/>
        <note>ligand shared between dimeric partners</note>
    </ligand>
</feature>
<feature type="binding site" evidence="1">
    <location>
        <position position="263"/>
    </location>
    <ligand>
        <name>(6R)-5,10-methylene-5,6,7,8-tetrahydrofolate</name>
        <dbReference type="ChEBI" id="CHEBI:15636"/>
    </ligand>
</feature>
<gene>
    <name evidence="1" type="primary">thyA</name>
    <name type="ordered locus">EFER_2760</name>
</gene>
<protein>
    <recommendedName>
        <fullName evidence="1">Thymidylate synthase</fullName>
        <shortName evidence="1">TS</shortName>
        <shortName evidence="1">TSase</shortName>
        <ecNumber evidence="1">2.1.1.45</ecNumber>
    </recommendedName>
</protein>
<sequence length="264" mass="30484">MKQYLELMQKVLDEGTQKNDRTGTGTLSIFGHQMRFNLQEGFPLVTTKRCHLRSIIHELLWFLQGDTNIAYLHENNVTIWDEWADENGDLGPVYGKQWRAWPTPDGRHIDQITTVLNQLKNDPDSRRIIVSAWNVGELDKMALAPCHAFFQFYVADGKLSCQLYQRSCDVFLGLPFNIASYALLVHMMAQQCDLEVGDFVWTGGDTHLYSNHMDQTHLQLSREPRSLPKLIIKRKPESIFDYRFEDFEIEGYDPHPGIKAPVAI</sequence>
<proteinExistence type="inferred from homology"/>
<organism>
    <name type="scientific">Escherichia fergusonii (strain ATCC 35469 / DSM 13698 / CCUG 18766 / IAM 14443 / JCM 21226 / LMG 7866 / NBRC 102419 / NCTC 12128 / CDC 0568-73)</name>
    <dbReference type="NCBI Taxonomy" id="585054"/>
    <lineage>
        <taxon>Bacteria</taxon>
        <taxon>Pseudomonadati</taxon>
        <taxon>Pseudomonadota</taxon>
        <taxon>Gammaproteobacteria</taxon>
        <taxon>Enterobacterales</taxon>
        <taxon>Enterobacteriaceae</taxon>
        <taxon>Escherichia</taxon>
    </lineage>
</organism>
<comment type="function">
    <text evidence="1">Catalyzes the reductive methylation of 2'-deoxyuridine-5'-monophosphate (dUMP) to 2'-deoxythymidine-5'-monophosphate (dTMP) while utilizing 5,10-methylenetetrahydrofolate (mTHF) as the methyl donor and reductant in the reaction, yielding dihydrofolate (DHF) as a by-product. This enzymatic reaction provides an intracellular de novo source of dTMP, an essential precursor for DNA biosynthesis.</text>
</comment>
<comment type="catalytic activity">
    <reaction evidence="1">
        <text>dUMP + (6R)-5,10-methylene-5,6,7,8-tetrahydrofolate = 7,8-dihydrofolate + dTMP</text>
        <dbReference type="Rhea" id="RHEA:12104"/>
        <dbReference type="ChEBI" id="CHEBI:15636"/>
        <dbReference type="ChEBI" id="CHEBI:57451"/>
        <dbReference type="ChEBI" id="CHEBI:63528"/>
        <dbReference type="ChEBI" id="CHEBI:246422"/>
        <dbReference type="EC" id="2.1.1.45"/>
    </reaction>
</comment>
<comment type="pathway">
    <text evidence="1">Pyrimidine metabolism; dTTP biosynthesis.</text>
</comment>
<comment type="subunit">
    <text evidence="1">Homodimer.</text>
</comment>
<comment type="subcellular location">
    <subcellularLocation>
        <location evidence="1">Cytoplasm</location>
    </subcellularLocation>
</comment>
<comment type="similarity">
    <text evidence="1">Belongs to the thymidylate synthase family. Bacterial-type ThyA subfamily.</text>
</comment>
<reference key="1">
    <citation type="journal article" date="2009" name="PLoS Genet.">
        <title>Organised genome dynamics in the Escherichia coli species results in highly diverse adaptive paths.</title>
        <authorList>
            <person name="Touchon M."/>
            <person name="Hoede C."/>
            <person name="Tenaillon O."/>
            <person name="Barbe V."/>
            <person name="Baeriswyl S."/>
            <person name="Bidet P."/>
            <person name="Bingen E."/>
            <person name="Bonacorsi S."/>
            <person name="Bouchier C."/>
            <person name="Bouvet O."/>
            <person name="Calteau A."/>
            <person name="Chiapello H."/>
            <person name="Clermont O."/>
            <person name="Cruveiller S."/>
            <person name="Danchin A."/>
            <person name="Diard M."/>
            <person name="Dossat C."/>
            <person name="Karoui M.E."/>
            <person name="Frapy E."/>
            <person name="Garry L."/>
            <person name="Ghigo J.M."/>
            <person name="Gilles A.M."/>
            <person name="Johnson J."/>
            <person name="Le Bouguenec C."/>
            <person name="Lescat M."/>
            <person name="Mangenot S."/>
            <person name="Martinez-Jehanne V."/>
            <person name="Matic I."/>
            <person name="Nassif X."/>
            <person name="Oztas S."/>
            <person name="Petit M.A."/>
            <person name="Pichon C."/>
            <person name="Rouy Z."/>
            <person name="Ruf C.S."/>
            <person name="Schneider D."/>
            <person name="Tourret J."/>
            <person name="Vacherie B."/>
            <person name="Vallenet D."/>
            <person name="Medigue C."/>
            <person name="Rocha E.P.C."/>
            <person name="Denamur E."/>
        </authorList>
    </citation>
    <scope>NUCLEOTIDE SEQUENCE [LARGE SCALE GENOMIC DNA]</scope>
    <source>
        <strain>ATCC 35469 / DSM 13698 / BCRC 15582 / CCUG 18766 / IAM 14443 / JCM 21226 / LMG 7866 / NBRC 102419 / NCTC 12128 / CDC 0568-73</strain>
    </source>
</reference>
<accession>B7LNI2</accession>
<dbReference type="EC" id="2.1.1.45" evidence="1"/>
<dbReference type="EMBL" id="CU928158">
    <property type="protein sequence ID" value="CAQ90255.1"/>
    <property type="molecule type" value="Genomic_DNA"/>
</dbReference>
<dbReference type="RefSeq" id="WP_000816250.1">
    <property type="nucleotide sequence ID" value="NC_011740.1"/>
</dbReference>
<dbReference type="SMR" id="B7LNI2"/>
<dbReference type="GeneID" id="75056203"/>
<dbReference type="KEGG" id="efe:EFER_2760"/>
<dbReference type="HOGENOM" id="CLU_021669_0_0_6"/>
<dbReference type="OrthoDB" id="9774633at2"/>
<dbReference type="UniPathway" id="UPA00575"/>
<dbReference type="Proteomes" id="UP000000745">
    <property type="component" value="Chromosome"/>
</dbReference>
<dbReference type="GO" id="GO:0005829">
    <property type="term" value="C:cytosol"/>
    <property type="evidence" value="ECO:0007669"/>
    <property type="project" value="TreeGrafter"/>
</dbReference>
<dbReference type="GO" id="GO:0004799">
    <property type="term" value="F:thymidylate synthase activity"/>
    <property type="evidence" value="ECO:0007669"/>
    <property type="project" value="UniProtKB-UniRule"/>
</dbReference>
<dbReference type="GO" id="GO:0006231">
    <property type="term" value="P:dTMP biosynthetic process"/>
    <property type="evidence" value="ECO:0007669"/>
    <property type="project" value="UniProtKB-UniRule"/>
</dbReference>
<dbReference type="GO" id="GO:0006235">
    <property type="term" value="P:dTTP biosynthetic process"/>
    <property type="evidence" value="ECO:0007669"/>
    <property type="project" value="UniProtKB-UniRule"/>
</dbReference>
<dbReference type="GO" id="GO:0032259">
    <property type="term" value="P:methylation"/>
    <property type="evidence" value="ECO:0007669"/>
    <property type="project" value="UniProtKB-KW"/>
</dbReference>
<dbReference type="CDD" id="cd00351">
    <property type="entry name" value="TS_Pyrimidine_HMase"/>
    <property type="match status" value="1"/>
</dbReference>
<dbReference type="FunFam" id="3.30.572.10:FF:000001">
    <property type="entry name" value="Thymidylate synthase"/>
    <property type="match status" value="1"/>
</dbReference>
<dbReference type="Gene3D" id="3.30.572.10">
    <property type="entry name" value="Thymidylate synthase/dCMP hydroxymethylase domain"/>
    <property type="match status" value="1"/>
</dbReference>
<dbReference type="HAMAP" id="MF_00008">
    <property type="entry name" value="Thymidy_synth_bact"/>
    <property type="match status" value="1"/>
</dbReference>
<dbReference type="InterPro" id="IPR045097">
    <property type="entry name" value="Thymidate_synth/dCMP_Mease"/>
</dbReference>
<dbReference type="InterPro" id="IPR023451">
    <property type="entry name" value="Thymidate_synth/dCMP_Mease_dom"/>
</dbReference>
<dbReference type="InterPro" id="IPR036926">
    <property type="entry name" value="Thymidate_synth/dCMP_Mease_sf"/>
</dbReference>
<dbReference type="InterPro" id="IPR000398">
    <property type="entry name" value="Thymidylate_synthase"/>
</dbReference>
<dbReference type="InterPro" id="IPR020940">
    <property type="entry name" value="Thymidylate_synthase_AS"/>
</dbReference>
<dbReference type="NCBIfam" id="NF002497">
    <property type="entry name" value="PRK01827.1-3"/>
    <property type="match status" value="1"/>
</dbReference>
<dbReference type="NCBIfam" id="NF002499">
    <property type="entry name" value="PRK01827.1-5"/>
    <property type="match status" value="1"/>
</dbReference>
<dbReference type="NCBIfam" id="TIGR03284">
    <property type="entry name" value="thym_sym"/>
    <property type="match status" value="2"/>
</dbReference>
<dbReference type="PANTHER" id="PTHR11548:SF9">
    <property type="entry name" value="THYMIDYLATE SYNTHASE"/>
    <property type="match status" value="1"/>
</dbReference>
<dbReference type="PANTHER" id="PTHR11548">
    <property type="entry name" value="THYMIDYLATE SYNTHASE 1"/>
    <property type="match status" value="1"/>
</dbReference>
<dbReference type="Pfam" id="PF00303">
    <property type="entry name" value="Thymidylat_synt"/>
    <property type="match status" value="1"/>
</dbReference>
<dbReference type="PRINTS" id="PR00108">
    <property type="entry name" value="THYMDSNTHASE"/>
</dbReference>
<dbReference type="SUPFAM" id="SSF55831">
    <property type="entry name" value="Thymidylate synthase/dCMP hydroxymethylase"/>
    <property type="match status" value="1"/>
</dbReference>
<dbReference type="PROSITE" id="PS00091">
    <property type="entry name" value="THYMIDYLATE_SYNTHASE"/>
    <property type="match status" value="1"/>
</dbReference>
<name>TYSY_ESCF3</name>